<accession>Q14BT6</accession>
<organism evidence="7">
    <name type="scientific">Mus musculus</name>
    <name type="common">Mouse</name>
    <dbReference type="NCBI Taxonomy" id="10090"/>
    <lineage>
        <taxon>Eukaryota</taxon>
        <taxon>Metazoa</taxon>
        <taxon>Chordata</taxon>
        <taxon>Craniata</taxon>
        <taxon>Vertebrata</taxon>
        <taxon>Euteleostomi</taxon>
        <taxon>Mammalia</taxon>
        <taxon>Eutheria</taxon>
        <taxon>Euarchontoglires</taxon>
        <taxon>Glires</taxon>
        <taxon>Rodentia</taxon>
        <taxon>Myomorpha</taxon>
        <taxon>Muroidea</taxon>
        <taxon>Muridae</taxon>
        <taxon>Murinae</taxon>
        <taxon>Mus</taxon>
        <taxon>Mus</taxon>
    </lineage>
</organism>
<gene>
    <name evidence="10" type="primary">A4gnt</name>
</gene>
<proteinExistence type="evidence at transcript level"/>
<dbReference type="EC" id="2.4.1.-" evidence="5"/>
<dbReference type="EMBL" id="AC156497">
    <property type="status" value="NOT_ANNOTATED_CDS"/>
    <property type="molecule type" value="Genomic_DNA"/>
</dbReference>
<dbReference type="EMBL" id="AC157949">
    <property type="status" value="NOT_ANNOTATED_CDS"/>
    <property type="molecule type" value="Genomic_DNA"/>
</dbReference>
<dbReference type="EMBL" id="CH466560">
    <property type="protein sequence ID" value="EDL21015.1"/>
    <property type="molecule type" value="Genomic_DNA"/>
</dbReference>
<dbReference type="EMBL" id="BC115614">
    <property type="protein sequence ID" value="AAI15615.1"/>
    <property type="molecule type" value="mRNA"/>
</dbReference>
<dbReference type="EMBL" id="BC115615">
    <property type="protein sequence ID" value="AAI15616.1"/>
    <property type="molecule type" value="mRNA"/>
</dbReference>
<dbReference type="CCDS" id="CCDS40740.1"/>
<dbReference type="RefSeq" id="NP_001070892.1">
    <property type="nucleotide sequence ID" value="NM_001077424.2"/>
</dbReference>
<dbReference type="RefSeq" id="XP_006511309.1">
    <property type="nucleotide sequence ID" value="XM_006511246.5"/>
</dbReference>
<dbReference type="SMR" id="Q14BT6"/>
<dbReference type="FunCoup" id="Q14BT6">
    <property type="interactions" value="13"/>
</dbReference>
<dbReference type="STRING" id="10090.ENSMUSP00000045629"/>
<dbReference type="CAZy" id="GT32">
    <property type="family name" value="Glycosyltransferase Family 32"/>
</dbReference>
<dbReference type="GlyCosmos" id="Q14BT6">
    <property type="glycosylation" value="1 site, No reported glycans"/>
</dbReference>
<dbReference type="GlyGen" id="Q14BT6">
    <property type="glycosylation" value="1 site"/>
</dbReference>
<dbReference type="iPTMnet" id="Q14BT6"/>
<dbReference type="PhosphoSitePlus" id="Q14BT6"/>
<dbReference type="PaxDb" id="10090-ENSMUSP00000045629"/>
<dbReference type="ProteomicsDB" id="296426"/>
<dbReference type="Antibodypedia" id="2373">
    <property type="antibodies" value="354 antibodies from 34 providers"/>
</dbReference>
<dbReference type="Ensembl" id="ENSMUST00000042553.8">
    <property type="protein sequence ID" value="ENSMUSP00000045629.8"/>
    <property type="gene ID" value="ENSMUSG00000037953.8"/>
</dbReference>
<dbReference type="GeneID" id="333424"/>
<dbReference type="KEGG" id="mmu:333424"/>
<dbReference type="UCSC" id="uc009rej.2">
    <property type="organism name" value="mouse"/>
</dbReference>
<dbReference type="AGR" id="MGI:2143261"/>
<dbReference type="CTD" id="51146"/>
<dbReference type="MGI" id="MGI:2143261">
    <property type="gene designation" value="A4gnt"/>
</dbReference>
<dbReference type="VEuPathDB" id="HostDB:ENSMUSG00000037953"/>
<dbReference type="eggNOG" id="KOG1928">
    <property type="taxonomic scope" value="Eukaryota"/>
</dbReference>
<dbReference type="GeneTree" id="ENSGT00510000047981"/>
<dbReference type="HOGENOM" id="CLU_049512_2_0_1"/>
<dbReference type="InParanoid" id="Q14BT6"/>
<dbReference type="OMA" id="IWDCMEN"/>
<dbReference type="OrthoDB" id="407609at2759"/>
<dbReference type="PhylomeDB" id="Q14BT6"/>
<dbReference type="TreeFam" id="TF324053"/>
<dbReference type="Reactome" id="R-MMU-913709">
    <property type="pathway name" value="O-linked glycosylation of mucins"/>
</dbReference>
<dbReference type="UniPathway" id="UPA00378"/>
<dbReference type="BioGRID-ORCS" id="333424">
    <property type="hits" value="1 hit in 76 CRISPR screens"/>
</dbReference>
<dbReference type="ChiTaRS" id="A4gnt">
    <property type="organism name" value="mouse"/>
</dbReference>
<dbReference type="PRO" id="PR:Q14BT6"/>
<dbReference type="Proteomes" id="UP000000589">
    <property type="component" value="Chromosome 9"/>
</dbReference>
<dbReference type="RNAct" id="Q14BT6">
    <property type="molecule type" value="protein"/>
</dbReference>
<dbReference type="Bgee" id="ENSMUSG00000037953">
    <property type="expression patterns" value="Expressed in epithelium of stomach and 31 other cell types or tissues"/>
</dbReference>
<dbReference type="GO" id="GO:0000139">
    <property type="term" value="C:Golgi membrane"/>
    <property type="evidence" value="ECO:0007669"/>
    <property type="project" value="UniProtKB-SubCell"/>
</dbReference>
<dbReference type="GO" id="GO:0008375">
    <property type="term" value="F:acetylglucosaminyltransferase activity"/>
    <property type="evidence" value="ECO:0000315"/>
    <property type="project" value="MGI"/>
</dbReference>
<dbReference type="GO" id="GO:0050673">
    <property type="term" value="P:epithelial cell proliferation"/>
    <property type="evidence" value="ECO:0000315"/>
    <property type="project" value="MGI"/>
</dbReference>
<dbReference type="GO" id="GO:0009101">
    <property type="term" value="P:glycoprotein biosynthetic process"/>
    <property type="evidence" value="ECO:0000266"/>
    <property type="project" value="MGI"/>
</dbReference>
<dbReference type="GO" id="GO:0050680">
    <property type="term" value="P:negative regulation of epithelial cell proliferation"/>
    <property type="evidence" value="ECO:0000315"/>
    <property type="project" value="MGI"/>
</dbReference>
<dbReference type="GO" id="GO:0006493">
    <property type="term" value="P:protein O-linked glycosylation"/>
    <property type="evidence" value="ECO:0000315"/>
    <property type="project" value="MGI"/>
</dbReference>
<dbReference type="FunFam" id="3.90.550.20:FF:000003">
    <property type="entry name" value="Lactosylceramide 4-alpha-galactosyltransferase"/>
    <property type="match status" value="1"/>
</dbReference>
<dbReference type="Gene3D" id="3.90.550.20">
    <property type="match status" value="1"/>
</dbReference>
<dbReference type="InterPro" id="IPR007652">
    <property type="entry name" value="A1-4-GlycosylTfrase_dom"/>
</dbReference>
<dbReference type="InterPro" id="IPR051981">
    <property type="entry name" value="Glycosyltransf_32"/>
</dbReference>
<dbReference type="InterPro" id="IPR007577">
    <property type="entry name" value="GlycoTrfase_DXD_sugar-bd_CS"/>
</dbReference>
<dbReference type="InterPro" id="IPR029044">
    <property type="entry name" value="Nucleotide-diphossugar_trans"/>
</dbReference>
<dbReference type="PANTHER" id="PTHR12042:SF16">
    <property type="entry name" value="ALPHA-1,4-N-ACETYLGLUCOSAMINYLTRANSFERASE"/>
    <property type="match status" value="1"/>
</dbReference>
<dbReference type="PANTHER" id="PTHR12042">
    <property type="entry name" value="LACTOSYLCERAMIDE 4-ALPHA-GALACTOSYLTRANSFERASE ALPHA- 1,4-GALACTOSYLTRANSFERASE"/>
    <property type="match status" value="1"/>
</dbReference>
<dbReference type="Pfam" id="PF04572">
    <property type="entry name" value="Gb3_synth"/>
    <property type="match status" value="1"/>
</dbReference>
<dbReference type="Pfam" id="PF04488">
    <property type="entry name" value="Gly_transf_sug"/>
    <property type="match status" value="1"/>
</dbReference>
<dbReference type="SUPFAM" id="SSF53448">
    <property type="entry name" value="Nucleotide-diphospho-sugar transferases"/>
    <property type="match status" value="1"/>
</dbReference>
<sequence>MLKEIYLSLSLVLVFACGLLYQLTMRSQCFFACLPPFSFPQGLDGLLRSGRSIMFIETSERVEPPPMVSCAVESAAKIYPEQPIIFFMKGLRDSVQLTSNTSYPAFSLLSAINNVFFVPLDMERLFKDTPLFSWYTKVNSSTEKHWLHVSSDAARLAIIWKYGGIYMDTDVISLQPIPEENFLAAQGSRHSSNGVFGFLPHHPFLWACMENFVEHYDSTIWGNQGPQLMTRMLRVWCRLKDFHGLGDLKCLNISFLHPQRFYPIPYPQWKRYYQVWDKEPSFNESYALHLWNYMNKEGKTVVRGSKTLVENLYQKHCPKTYRVLIQGAEGTVSKKPGTGSR</sequence>
<comment type="function">
    <text evidence="3">Catalyzes the transfer of N-acetylglucosamine (GlcNAc) to core 2 branched O-glycans. Necessary for the synthesis of type III mucin which is specifically produced in the stomach, duodenum, and pancreatic duct. May protect against inflammation-associated gastric adenocarcinoma.</text>
</comment>
<comment type="pathway">
    <text evidence="3">Protein modification; protein glycosylation.</text>
</comment>
<comment type="subcellular location">
    <subcellularLocation>
        <location evidence="5">Golgi apparatus membrane</location>
        <topology evidence="5">Single-pass type II membrane protein</topology>
    </subcellularLocation>
</comment>
<comment type="domain">
    <text evidence="1">The conserved DXD motif is involved in enzyme activity.</text>
</comment>
<comment type="disruption phenotype">
    <text evidence="3">Viable with no gross defects. Gastric mucosa cells and duodenal Brunner's glands have an altered O-linked glycosylation profile with complete loss of terminal alpha-1,4-linked N-acetylglucosamine residues (alpha-GlcNAc). Animals develop spontaneous gastric adenocarcinomas, with all individuals affected by 60 weeks of age. Hyperplasia of surface mucous cells and pyloric gland cells is observed as early as 5 weeks of age, associated with increased inflammatory responses in the gastric mucosa.</text>
</comment>
<comment type="similarity">
    <text evidence="5">Belongs to the glycosyltransferase 32 family.</text>
</comment>
<protein>
    <recommendedName>
        <fullName evidence="4">Alpha-1,4-N-acetylglucosaminyltransferase</fullName>
        <shortName evidence="4">Alpha4GnT</shortName>
        <ecNumber evidence="5">2.4.1.-</ecNumber>
    </recommendedName>
</protein>
<keyword id="KW-0325">Glycoprotein</keyword>
<keyword id="KW-0328">Glycosyltransferase</keyword>
<keyword id="KW-0333">Golgi apparatus</keyword>
<keyword id="KW-0472">Membrane</keyword>
<keyword id="KW-1185">Reference proteome</keyword>
<keyword id="KW-0735">Signal-anchor</keyword>
<keyword id="KW-0808">Transferase</keyword>
<keyword id="KW-0812">Transmembrane</keyword>
<keyword id="KW-1133">Transmembrane helix</keyword>
<name>A4GCT_MOUSE</name>
<feature type="chain" id="PRO_0000439855" description="Alpha-1,4-N-acetylglucosaminyltransferase">
    <location>
        <begin position="1"/>
        <end position="341"/>
    </location>
</feature>
<feature type="topological domain" description="Cytoplasmic" evidence="5">
    <location>
        <begin position="1"/>
        <end position="4"/>
    </location>
</feature>
<feature type="transmembrane region" description="Helical; Signal-anchor for type II membrane protein" evidence="2">
    <location>
        <begin position="5"/>
        <end position="25"/>
    </location>
</feature>
<feature type="topological domain" description="Lumenal" evidence="5">
    <location>
        <begin position="26"/>
        <end position="341"/>
    </location>
</feature>
<feature type="short sequence motif" description="DXD motif" evidence="1">
    <location>
        <begin position="168"/>
        <end position="170"/>
    </location>
</feature>
<feature type="glycosylation site" description="N-linked (GlcNAc...) asparagine" evidence="2">
    <location>
        <position position="100"/>
    </location>
</feature>
<evidence type="ECO:0000250" key="1">
    <source>
        <dbReference type="UniProtKB" id="Q9JI93"/>
    </source>
</evidence>
<evidence type="ECO:0000255" key="2"/>
<evidence type="ECO:0000269" key="3">
    <source>
    </source>
</evidence>
<evidence type="ECO:0000303" key="4">
    <source>
    </source>
</evidence>
<evidence type="ECO:0000305" key="5"/>
<evidence type="ECO:0000312" key="6">
    <source>
        <dbReference type="EMBL" id="AAI15615.1"/>
    </source>
</evidence>
<evidence type="ECO:0000312" key="7">
    <source>
        <dbReference type="EMBL" id="AAI15616.1"/>
    </source>
</evidence>
<evidence type="ECO:0000312" key="8">
    <source>
        <dbReference type="EMBL" id="AC156497"/>
    </source>
</evidence>
<evidence type="ECO:0000312" key="9">
    <source>
        <dbReference type="EMBL" id="EDL21015.1"/>
    </source>
</evidence>
<evidence type="ECO:0000312" key="10">
    <source>
        <dbReference type="MGI" id="MGI:2143261"/>
    </source>
</evidence>
<reference evidence="8" key="1">
    <citation type="journal article" date="2009" name="PLoS Biol.">
        <title>Lineage-specific biology revealed by a finished genome assembly of the mouse.</title>
        <authorList>
            <person name="Church D.M."/>
            <person name="Goodstadt L."/>
            <person name="Hillier L.W."/>
            <person name="Zody M.C."/>
            <person name="Goldstein S."/>
            <person name="She X."/>
            <person name="Bult C.J."/>
            <person name="Agarwala R."/>
            <person name="Cherry J.L."/>
            <person name="DiCuccio M."/>
            <person name="Hlavina W."/>
            <person name="Kapustin Y."/>
            <person name="Meric P."/>
            <person name="Maglott D."/>
            <person name="Birtle Z."/>
            <person name="Marques A.C."/>
            <person name="Graves T."/>
            <person name="Zhou S."/>
            <person name="Teague B."/>
            <person name="Potamousis K."/>
            <person name="Churas C."/>
            <person name="Place M."/>
            <person name="Herschleb J."/>
            <person name="Runnheim R."/>
            <person name="Forrest D."/>
            <person name="Amos-Landgraf J."/>
            <person name="Schwartz D.C."/>
            <person name="Cheng Z."/>
            <person name="Lindblad-Toh K."/>
            <person name="Eichler E.E."/>
            <person name="Ponting C.P."/>
        </authorList>
    </citation>
    <scope>NUCLEOTIDE SEQUENCE [LARGE SCALE GENOMIC DNA]</scope>
    <source>
        <strain>C57BL/6J</strain>
    </source>
</reference>
<reference evidence="9" key="2">
    <citation type="submission" date="2005-07" db="EMBL/GenBank/DDBJ databases">
        <authorList>
            <person name="Mural R.J."/>
            <person name="Adams M.D."/>
            <person name="Myers E.W."/>
            <person name="Smith H.O."/>
            <person name="Venter J.C."/>
        </authorList>
    </citation>
    <scope>NUCLEOTIDE SEQUENCE [LARGE SCALE GENOMIC DNA]</scope>
</reference>
<reference evidence="6" key="3">
    <citation type="journal article" date="2004" name="Genome Res.">
        <title>The status, quality, and expansion of the NIH full-length cDNA project: the Mammalian Gene Collection (MGC).</title>
        <authorList>
            <consortium name="The MGC Project Team"/>
        </authorList>
    </citation>
    <scope>NUCLEOTIDE SEQUENCE [LARGE SCALE MRNA]</scope>
</reference>
<reference evidence="5" key="4">
    <citation type="journal article" date="2012" name="J. Clin. Invest.">
        <title>Essential role of gastric gland mucin in preventing gastric cancer in mice.</title>
        <authorList>
            <person name="Karasawa F."/>
            <person name="Shiota A."/>
            <person name="Goso Y."/>
            <person name="Kobayashi M."/>
            <person name="Sato Y."/>
            <person name="Masumoto J."/>
            <person name="Fujiwara M."/>
            <person name="Yokosawa S."/>
            <person name="Muraki T."/>
            <person name="Miyagawa S."/>
            <person name="Ueda M."/>
            <person name="Fukuda M.N."/>
            <person name="Fukuda M."/>
            <person name="Ishihara K."/>
            <person name="Nakayama J."/>
        </authorList>
    </citation>
    <scope>FUNCTION</scope>
    <scope>PATHWAY</scope>
    <scope>DISRUPTION PHENOTYPE</scope>
</reference>